<evidence type="ECO:0000250" key="1">
    <source>
        <dbReference type="UniProtKB" id="Q1K8B6"/>
    </source>
</evidence>
<evidence type="ECO:0000250" key="2">
    <source>
        <dbReference type="UniProtKB" id="Q4WP32"/>
    </source>
</evidence>
<evidence type="ECO:0000255" key="3"/>
<evidence type="ECO:0000255" key="4">
    <source>
        <dbReference type="PROSITE-ProRule" id="PRU00498"/>
    </source>
</evidence>
<evidence type="ECO:0000269" key="5">
    <source>
    </source>
</evidence>
<evidence type="ECO:0000303" key="6">
    <source>
    </source>
</evidence>
<evidence type="ECO:0000305" key="7"/>
<evidence type="ECO:0000305" key="8">
    <source>
    </source>
</evidence>
<sequence>MKVLATLLASVGLVAAHGYVDNATIGGQYYQMLTVSQFYQPYMDPYMGNNKPQRVSRSIPGNGPVENVDSIDVQCNAGSVPAPLHAPAAAGSTVTLHWTLWPDSHMGPVITYMARCPDSGCQNWSPGTSYVPRCPNVVRINANLSKGPSGSKSSKVAYTIPSCIRPGYYLVRHEIIALHAAWAYPGAQFYPGCHQLQVTGGGSTNPTNLVSFPGAYKSTDPGVTYDAYKEIETDMDLSIAQAYTIPGPAVFTC</sequence>
<keyword id="KW-0119">Carbohydrate metabolism</keyword>
<keyword id="KW-0136">Cellulose degradation</keyword>
<keyword id="KW-0186">Copper</keyword>
<keyword id="KW-1015">Disulfide bond</keyword>
<keyword id="KW-0325">Glycoprotein</keyword>
<keyword id="KW-0479">Metal-binding</keyword>
<keyword id="KW-0503">Monooxygenase</keyword>
<keyword id="KW-0560">Oxidoreductase</keyword>
<keyword id="KW-0624">Polysaccharide degradation</keyword>
<keyword id="KW-1185">Reference proteome</keyword>
<keyword id="KW-0964">Secreted</keyword>
<keyword id="KW-0732">Signal</keyword>
<accession>B2B403</accession>
<reference key="1">
    <citation type="journal article" date="2008" name="Genome Biol.">
        <title>The genome sequence of the model ascomycete fungus Podospora anserina.</title>
        <authorList>
            <person name="Espagne E."/>
            <person name="Lespinet O."/>
            <person name="Malagnac F."/>
            <person name="Da Silva C."/>
            <person name="Jaillon O."/>
            <person name="Porcel B.M."/>
            <person name="Couloux A."/>
            <person name="Aury J.-M."/>
            <person name="Segurens B."/>
            <person name="Poulain J."/>
            <person name="Anthouard V."/>
            <person name="Grossetete S."/>
            <person name="Khalili H."/>
            <person name="Coppin E."/>
            <person name="Dequard-Chablat M."/>
            <person name="Picard M."/>
            <person name="Contamine V."/>
            <person name="Arnaise S."/>
            <person name="Bourdais A."/>
            <person name="Berteaux-Lecellier V."/>
            <person name="Gautheret D."/>
            <person name="de Vries R.P."/>
            <person name="Battaglia E."/>
            <person name="Coutinho P.M."/>
            <person name="Danchin E.G.J."/>
            <person name="Henrissat B."/>
            <person name="El Khoury R."/>
            <person name="Sainsard-Chanet A."/>
            <person name="Boivin A."/>
            <person name="Pinan-Lucarre B."/>
            <person name="Sellem C.H."/>
            <person name="Debuchy R."/>
            <person name="Wincker P."/>
            <person name="Weissenbach J."/>
            <person name="Silar P."/>
        </authorList>
    </citation>
    <scope>NUCLEOTIDE SEQUENCE [LARGE SCALE GENOMIC DNA]</scope>
    <source>
        <strain>S / ATCC MYA-4624 / DSM 980 / FGSC 10383</strain>
    </source>
</reference>
<reference key="2">
    <citation type="journal article" date="2014" name="Genetics">
        <title>Maintaining two mating types: Structure of the mating type locus and its role in heterokaryosis in Podospora anserina.</title>
        <authorList>
            <person name="Grognet P."/>
            <person name="Bidard F."/>
            <person name="Kuchly C."/>
            <person name="Tong L.C.H."/>
            <person name="Coppin E."/>
            <person name="Benkhali J.A."/>
            <person name="Couloux A."/>
            <person name="Wincker P."/>
            <person name="Debuchy R."/>
            <person name="Silar P."/>
        </authorList>
    </citation>
    <scope>GENOME REANNOTATION</scope>
    <source>
        <strain>S / ATCC MYA-4624 / DSM 980 / FGSC 10383</strain>
    </source>
</reference>
<reference key="3">
    <citation type="journal article" date="2015" name="Biotechnol. Biofuels">
        <title>Substrate specificity and regioselectivity of fungal AA9 lytic polysaccharide monooxygenases secreted by Podospora anserina.</title>
        <authorList>
            <person name="Bennati-Granier C."/>
            <person name="Garajova S."/>
            <person name="Champion C."/>
            <person name="Grisel S."/>
            <person name="Haon M."/>
            <person name="Zhou S."/>
            <person name="Fanuel M."/>
            <person name="Ropartz D."/>
            <person name="Rogniaux H."/>
            <person name="Gimbert I."/>
            <person name="Record E."/>
            <person name="Berrin J.G."/>
        </authorList>
    </citation>
    <scope>FUNCTION</scope>
    <scope>CATALYTIC ACTIVITY</scope>
</reference>
<comment type="function">
    <text evidence="5">Lytic polysaccharide monooxygenase (LPMO) that depolymerizes crystalline and amorphous polysaccharides via the oxidation of scissile alpha- or beta-(1-4)-glycosidic bonds, yielding C1 or C4 oxidation products (PubMed:26136828). Catalysis by LPMOs requires the reduction of the active-site copper from Cu(II) to Cu(I) by a reducing agent and H(2)O(2) or O(2) as a cosubstrate (PubMed:26136828).</text>
</comment>
<comment type="catalytic activity">
    <reaction evidence="5">
        <text>[(1-&gt;4)-beta-D-glucosyl]n+m + reduced acceptor + O2 = 4-dehydro-beta-D-glucosyl-[(1-&gt;4)-beta-D-glucosyl]n-1 + [(1-&gt;4)-beta-D-glucosyl]m + acceptor + H2O.</text>
        <dbReference type="EC" id="1.14.99.56"/>
    </reaction>
</comment>
<comment type="cofactor">
    <cofactor evidence="1">
        <name>Cu(2+)</name>
        <dbReference type="ChEBI" id="CHEBI:29036"/>
    </cofactor>
    <text evidence="1">Binds 1 copper ion per subunit.</text>
</comment>
<comment type="subcellular location">
    <subcellularLocation>
        <location evidence="8">Secreted</location>
    </subcellularLocation>
</comment>
<comment type="biotechnology">
    <text evidence="8">Lignocellulose is the most abundant polymeric composite on Earth and is a recalcitrant but promising renewable substrate for industrial biotechnology applications. Together with cellobiose dehydrogenases (CDHs) an enzymatic system capable of oxidative cellulose cleavage is formed, which increases the efficiency of cellulases and put LPMOs at focus of biofuel research.</text>
</comment>
<comment type="similarity">
    <text evidence="7">Belongs to the polysaccharide monooxygenase AA9 family.</text>
</comment>
<feature type="signal peptide" evidence="3">
    <location>
        <begin position="1"/>
        <end position="16"/>
    </location>
</feature>
<feature type="chain" id="PRO_5007639250" description="AA9 family lytic polysaccharide monooxygenase F">
    <location>
        <begin position="17"/>
        <end position="253"/>
    </location>
</feature>
<feature type="binding site" evidence="1">
    <location>
        <position position="17"/>
    </location>
    <ligand>
        <name>Cu(2+)</name>
        <dbReference type="ChEBI" id="CHEBI:29036"/>
        <note>catalytic</note>
    </ligand>
</feature>
<feature type="binding site" evidence="1">
    <location>
        <position position="105"/>
    </location>
    <ligand>
        <name>Cu(2+)</name>
        <dbReference type="ChEBI" id="CHEBI:29036"/>
        <note>catalytic</note>
    </ligand>
</feature>
<feature type="binding site" evidence="1">
    <location>
        <position position="179"/>
    </location>
    <ligand>
        <name>O2</name>
        <dbReference type="ChEBI" id="CHEBI:15379"/>
    </ligand>
</feature>
<feature type="binding site" evidence="1">
    <location>
        <position position="188"/>
    </location>
    <ligand>
        <name>O2</name>
        <dbReference type="ChEBI" id="CHEBI:15379"/>
    </ligand>
</feature>
<feature type="binding site" evidence="1">
    <location>
        <position position="190"/>
    </location>
    <ligand>
        <name>Cu(2+)</name>
        <dbReference type="ChEBI" id="CHEBI:29036"/>
        <note>catalytic</note>
    </ligand>
</feature>
<feature type="glycosylation site" description="N-linked (GlcNAc...) asparagine" evidence="4">
    <location>
        <position position="22"/>
    </location>
</feature>
<feature type="glycosylation site" description="N-linked (GlcNAc...) asparagine" evidence="4">
    <location>
        <position position="143"/>
    </location>
</feature>
<feature type="disulfide bond" evidence="2">
    <location>
        <begin position="75"/>
        <end position="193"/>
    </location>
</feature>
<feature type="disulfide bond" evidence="2">
    <location>
        <begin position="163"/>
        <end position="253"/>
    </location>
</feature>
<organism>
    <name type="scientific">Podospora anserina (strain S / ATCC MYA-4624 / DSM 980 / FGSC 10383)</name>
    <name type="common">Pleurage anserina</name>
    <dbReference type="NCBI Taxonomy" id="515849"/>
    <lineage>
        <taxon>Eukaryota</taxon>
        <taxon>Fungi</taxon>
        <taxon>Dikarya</taxon>
        <taxon>Ascomycota</taxon>
        <taxon>Pezizomycotina</taxon>
        <taxon>Sordariomycetes</taxon>
        <taxon>Sordariomycetidae</taxon>
        <taxon>Sordariales</taxon>
        <taxon>Podosporaceae</taxon>
        <taxon>Podospora</taxon>
        <taxon>Podospora anserina</taxon>
    </lineage>
</organism>
<dbReference type="EC" id="1.14.99.56" evidence="5"/>
<dbReference type="EMBL" id="CU638744">
    <property type="protein sequence ID" value="CAP71839.1"/>
    <property type="molecule type" value="Genomic_DNA"/>
</dbReference>
<dbReference type="EMBL" id="FO904941">
    <property type="protein sequence ID" value="CDP31230.1"/>
    <property type="molecule type" value="Genomic_DNA"/>
</dbReference>
<dbReference type="RefSeq" id="XP_001910703.1">
    <property type="nucleotide sequence ID" value="XM_001910668.1"/>
</dbReference>
<dbReference type="SMR" id="B2B403"/>
<dbReference type="STRING" id="515849.B2B403"/>
<dbReference type="CAZy" id="AA9">
    <property type="family name" value="Auxiliary Activities 9"/>
</dbReference>
<dbReference type="GeneID" id="6195000"/>
<dbReference type="KEGG" id="pan:PODANSg7742"/>
<dbReference type="VEuPathDB" id="FungiDB:PODANS_6_7780"/>
<dbReference type="eggNOG" id="ENOG502QVRD">
    <property type="taxonomic scope" value="Eukaryota"/>
</dbReference>
<dbReference type="HOGENOM" id="CLU_031730_1_1_1"/>
<dbReference type="OrthoDB" id="4849160at2759"/>
<dbReference type="Proteomes" id="UP000001197">
    <property type="component" value="Chromosome 6"/>
</dbReference>
<dbReference type="GO" id="GO:0005576">
    <property type="term" value="C:extracellular region"/>
    <property type="evidence" value="ECO:0007669"/>
    <property type="project" value="UniProtKB-SubCell"/>
</dbReference>
<dbReference type="GO" id="GO:0046872">
    <property type="term" value="F:metal ion binding"/>
    <property type="evidence" value="ECO:0007669"/>
    <property type="project" value="UniProtKB-KW"/>
</dbReference>
<dbReference type="GO" id="GO:0004497">
    <property type="term" value="F:monooxygenase activity"/>
    <property type="evidence" value="ECO:0007669"/>
    <property type="project" value="UniProtKB-KW"/>
</dbReference>
<dbReference type="GO" id="GO:0030245">
    <property type="term" value="P:cellulose catabolic process"/>
    <property type="evidence" value="ECO:0007669"/>
    <property type="project" value="UniProtKB-KW"/>
</dbReference>
<dbReference type="CDD" id="cd21175">
    <property type="entry name" value="LPMO_AA9"/>
    <property type="match status" value="1"/>
</dbReference>
<dbReference type="Gene3D" id="2.70.50.70">
    <property type="match status" value="1"/>
</dbReference>
<dbReference type="InterPro" id="IPR049892">
    <property type="entry name" value="AA9"/>
</dbReference>
<dbReference type="InterPro" id="IPR005103">
    <property type="entry name" value="AA9_LPMO"/>
</dbReference>
<dbReference type="PANTHER" id="PTHR33353:SF6">
    <property type="entry name" value="ENDOGLUCANASE IV"/>
    <property type="match status" value="1"/>
</dbReference>
<dbReference type="PANTHER" id="PTHR33353">
    <property type="entry name" value="PUTATIVE (AFU_ORTHOLOGUE AFUA_1G12560)-RELATED"/>
    <property type="match status" value="1"/>
</dbReference>
<dbReference type="Pfam" id="PF03443">
    <property type="entry name" value="AA9"/>
    <property type="match status" value="1"/>
</dbReference>
<gene>
    <name evidence="6" type="primary">LPMO9F</name>
    <name type="ORF">PODANS_6_7780</name>
</gene>
<proteinExistence type="evidence at protein level"/>
<protein>
    <recommendedName>
        <fullName evidence="6">AA9 family lytic polysaccharide monooxygenase F</fullName>
        <shortName evidence="6">LPMO9F</shortName>
        <ecNumber evidence="5">1.14.99.56</ecNumber>
    </recommendedName>
    <alternativeName>
        <fullName evidence="7">Cellulase LPMO9F</fullName>
    </alternativeName>
    <alternativeName>
        <fullName evidence="7">Endo-beta-1,4-glucanase LPMO9F</fullName>
        <shortName evidence="7">Endoglucanase LPMO9F</shortName>
    </alternativeName>
    <alternativeName>
        <fullName evidence="7">Glycosyl hydrolase 61 family protein LPMO9F</fullName>
    </alternativeName>
</protein>
<name>LP9F_PODAN</name>